<evidence type="ECO:0000250" key="1"/>
<evidence type="ECO:0000255" key="2"/>
<evidence type="ECO:0000305" key="3"/>
<feature type="chain" id="PRO_0000318815" description="Probable cytochrome P450 513B1">
    <location>
        <begin position="1"/>
        <end position="487"/>
    </location>
</feature>
<feature type="transmembrane region" description="Helical" evidence="2">
    <location>
        <begin position="1"/>
        <end position="18"/>
    </location>
</feature>
<feature type="binding site" description="axial binding residue" evidence="1">
    <location>
        <position position="433"/>
    </location>
    <ligand>
        <name>heme</name>
        <dbReference type="ChEBI" id="CHEBI:30413"/>
    </ligand>
    <ligandPart>
        <name>Fe</name>
        <dbReference type="ChEBI" id="CHEBI:18248"/>
    </ligandPart>
</feature>
<gene>
    <name type="primary">cyp513B1</name>
    <name type="ORF">DDB_G0287087</name>
</gene>
<proteinExistence type="inferred from homology"/>
<sequence>MNLLVLSVILAIIIYLIFKRNYKYSPSKINSKIPGPIGLPIFGNILSLDNKNGIHTTFQKWFKIYGPIYSVNMGNKSAVVLTGFPIIKKAFIDNSEAFAPHYTFESRYKLNKCSDITQENGKNQSALKRIFLSELTVTRIKKQESHIQNEIVKLMKVLDKHSEDGKPFLLNNYFSMFSINIISRFLFGIDFPYQDFEETSDLMVGIRDLLIASGEIVLSDFLPIPHSKRSKLYTSYQALVVQIETLVKSHKYKEDDECMLSKLMIEHDKGNIPWDAVISNCNTIITAGSDSTSSTALFFLIEMMNNPTIQTKVYNDIVVSFEQNQQADDYMNESMVILKYSKYRSLIPYLSLALKENYRKHPAAPFGAPHETTQETVIEGYTIAKGTMIFQNIYATQRSDTFYSQPDEFIPERWNGDENSQTLISFGTGIRDCIGKSLAYNEIFTIIASVLNRYEFINPNPSIPFDDNGIPGLTTQCKNTVVQIKKR</sequence>
<comment type="cofactor">
    <cofactor evidence="1">
        <name>heme</name>
        <dbReference type="ChEBI" id="CHEBI:30413"/>
    </cofactor>
</comment>
<comment type="subcellular location">
    <subcellularLocation>
        <location evidence="3">Membrane</location>
        <topology evidence="3">Single-pass membrane protein</topology>
    </subcellularLocation>
</comment>
<comment type="similarity">
    <text evidence="3">Belongs to the cytochrome P450 family.</text>
</comment>
<dbReference type="EC" id="1.14.-.-"/>
<dbReference type="EMBL" id="AAFI02000096">
    <property type="protein sequence ID" value="EAL63908.1"/>
    <property type="molecule type" value="Genomic_DNA"/>
</dbReference>
<dbReference type="RefSeq" id="XP_637420.1">
    <property type="nucleotide sequence ID" value="XM_632328.1"/>
</dbReference>
<dbReference type="SMR" id="Q54KV0"/>
<dbReference type="STRING" id="44689.Q54KV0"/>
<dbReference type="PaxDb" id="44689-DDB0232339"/>
<dbReference type="EnsemblProtists" id="EAL63908">
    <property type="protein sequence ID" value="EAL63908"/>
    <property type="gene ID" value="DDB_G0287087"/>
</dbReference>
<dbReference type="GeneID" id="8625952"/>
<dbReference type="KEGG" id="ddi:DDB_G0287087"/>
<dbReference type="dictyBase" id="DDB_G0287087">
    <property type="gene designation" value="cyp513B1"/>
</dbReference>
<dbReference type="VEuPathDB" id="AmoebaDB:DDB_G0287087"/>
<dbReference type="eggNOG" id="KOG0156">
    <property type="taxonomic scope" value="Eukaryota"/>
</dbReference>
<dbReference type="HOGENOM" id="CLU_001570_2_3_1"/>
<dbReference type="InParanoid" id="Q54KV0"/>
<dbReference type="OMA" id="FTDLFCA"/>
<dbReference type="PhylomeDB" id="Q54KV0"/>
<dbReference type="PRO" id="PR:Q54KV0"/>
<dbReference type="Proteomes" id="UP000002195">
    <property type="component" value="Chromosome 4"/>
</dbReference>
<dbReference type="GO" id="GO:0016020">
    <property type="term" value="C:membrane"/>
    <property type="evidence" value="ECO:0007669"/>
    <property type="project" value="UniProtKB-SubCell"/>
</dbReference>
<dbReference type="GO" id="GO:0020037">
    <property type="term" value="F:heme binding"/>
    <property type="evidence" value="ECO:0007669"/>
    <property type="project" value="InterPro"/>
</dbReference>
<dbReference type="GO" id="GO:0005506">
    <property type="term" value="F:iron ion binding"/>
    <property type="evidence" value="ECO:0007669"/>
    <property type="project" value="InterPro"/>
</dbReference>
<dbReference type="GO" id="GO:0004497">
    <property type="term" value="F:monooxygenase activity"/>
    <property type="evidence" value="ECO:0007669"/>
    <property type="project" value="UniProtKB-KW"/>
</dbReference>
<dbReference type="GO" id="GO:0016705">
    <property type="term" value="F:oxidoreductase activity, acting on paired donors, with incorporation or reduction of molecular oxygen"/>
    <property type="evidence" value="ECO:0007669"/>
    <property type="project" value="InterPro"/>
</dbReference>
<dbReference type="CDD" id="cd20617">
    <property type="entry name" value="CYP1_2-like"/>
    <property type="match status" value="1"/>
</dbReference>
<dbReference type="Gene3D" id="1.10.630.10">
    <property type="entry name" value="Cytochrome P450"/>
    <property type="match status" value="1"/>
</dbReference>
<dbReference type="InterPro" id="IPR001128">
    <property type="entry name" value="Cyt_P450"/>
</dbReference>
<dbReference type="InterPro" id="IPR017972">
    <property type="entry name" value="Cyt_P450_CS"/>
</dbReference>
<dbReference type="InterPro" id="IPR002401">
    <property type="entry name" value="Cyt_P450_E_grp-I"/>
</dbReference>
<dbReference type="InterPro" id="IPR036396">
    <property type="entry name" value="Cyt_P450_sf"/>
</dbReference>
<dbReference type="PANTHER" id="PTHR24303:SF11">
    <property type="entry name" value="CYTOCHROME P450 513A1-RELATED"/>
    <property type="match status" value="1"/>
</dbReference>
<dbReference type="PANTHER" id="PTHR24303">
    <property type="entry name" value="HEME-BINDING MONOOXYGENASE FAMILY"/>
    <property type="match status" value="1"/>
</dbReference>
<dbReference type="Pfam" id="PF00067">
    <property type="entry name" value="p450"/>
    <property type="match status" value="1"/>
</dbReference>
<dbReference type="PRINTS" id="PR00463">
    <property type="entry name" value="EP450I"/>
</dbReference>
<dbReference type="PRINTS" id="PR00385">
    <property type="entry name" value="P450"/>
</dbReference>
<dbReference type="SUPFAM" id="SSF48264">
    <property type="entry name" value="Cytochrome P450"/>
    <property type="match status" value="1"/>
</dbReference>
<dbReference type="PROSITE" id="PS00086">
    <property type="entry name" value="CYTOCHROME_P450"/>
    <property type="match status" value="1"/>
</dbReference>
<organism>
    <name type="scientific">Dictyostelium discoideum</name>
    <name type="common">Social amoeba</name>
    <dbReference type="NCBI Taxonomy" id="44689"/>
    <lineage>
        <taxon>Eukaryota</taxon>
        <taxon>Amoebozoa</taxon>
        <taxon>Evosea</taxon>
        <taxon>Eumycetozoa</taxon>
        <taxon>Dictyostelia</taxon>
        <taxon>Dictyosteliales</taxon>
        <taxon>Dictyosteliaceae</taxon>
        <taxon>Dictyostelium</taxon>
    </lineage>
</organism>
<protein>
    <recommendedName>
        <fullName>Probable cytochrome P450 513B1</fullName>
        <ecNumber>1.14.-.-</ecNumber>
    </recommendedName>
</protein>
<keyword id="KW-0349">Heme</keyword>
<keyword id="KW-0408">Iron</keyword>
<keyword id="KW-0472">Membrane</keyword>
<keyword id="KW-0479">Metal-binding</keyword>
<keyword id="KW-0503">Monooxygenase</keyword>
<keyword id="KW-0560">Oxidoreductase</keyword>
<keyword id="KW-1185">Reference proteome</keyword>
<keyword id="KW-0812">Transmembrane</keyword>
<keyword id="KW-1133">Transmembrane helix</keyword>
<reference key="1">
    <citation type="journal article" date="2005" name="Nature">
        <title>The genome of the social amoeba Dictyostelium discoideum.</title>
        <authorList>
            <person name="Eichinger L."/>
            <person name="Pachebat J.A."/>
            <person name="Gloeckner G."/>
            <person name="Rajandream M.A."/>
            <person name="Sucgang R."/>
            <person name="Berriman M."/>
            <person name="Song J."/>
            <person name="Olsen R."/>
            <person name="Szafranski K."/>
            <person name="Xu Q."/>
            <person name="Tunggal B."/>
            <person name="Kummerfeld S."/>
            <person name="Madera M."/>
            <person name="Konfortov B.A."/>
            <person name="Rivero F."/>
            <person name="Bankier A.T."/>
            <person name="Lehmann R."/>
            <person name="Hamlin N."/>
            <person name="Davies R."/>
            <person name="Gaudet P."/>
            <person name="Fey P."/>
            <person name="Pilcher K."/>
            <person name="Chen G."/>
            <person name="Saunders D."/>
            <person name="Sodergren E.J."/>
            <person name="Davis P."/>
            <person name="Kerhornou A."/>
            <person name="Nie X."/>
            <person name="Hall N."/>
            <person name="Anjard C."/>
            <person name="Hemphill L."/>
            <person name="Bason N."/>
            <person name="Farbrother P."/>
            <person name="Desany B."/>
            <person name="Just E."/>
            <person name="Morio T."/>
            <person name="Rost R."/>
            <person name="Churcher C.M."/>
            <person name="Cooper J."/>
            <person name="Haydock S."/>
            <person name="van Driessche N."/>
            <person name="Cronin A."/>
            <person name="Goodhead I."/>
            <person name="Muzny D.M."/>
            <person name="Mourier T."/>
            <person name="Pain A."/>
            <person name="Lu M."/>
            <person name="Harper D."/>
            <person name="Lindsay R."/>
            <person name="Hauser H."/>
            <person name="James K.D."/>
            <person name="Quiles M."/>
            <person name="Madan Babu M."/>
            <person name="Saito T."/>
            <person name="Buchrieser C."/>
            <person name="Wardroper A."/>
            <person name="Felder M."/>
            <person name="Thangavelu M."/>
            <person name="Johnson D."/>
            <person name="Knights A."/>
            <person name="Loulseged H."/>
            <person name="Mungall K.L."/>
            <person name="Oliver K."/>
            <person name="Price C."/>
            <person name="Quail M.A."/>
            <person name="Urushihara H."/>
            <person name="Hernandez J."/>
            <person name="Rabbinowitsch E."/>
            <person name="Steffen D."/>
            <person name="Sanders M."/>
            <person name="Ma J."/>
            <person name="Kohara Y."/>
            <person name="Sharp S."/>
            <person name="Simmonds M.N."/>
            <person name="Spiegler S."/>
            <person name="Tivey A."/>
            <person name="Sugano S."/>
            <person name="White B."/>
            <person name="Walker D."/>
            <person name="Woodward J.R."/>
            <person name="Winckler T."/>
            <person name="Tanaka Y."/>
            <person name="Shaulsky G."/>
            <person name="Schleicher M."/>
            <person name="Weinstock G.M."/>
            <person name="Rosenthal A."/>
            <person name="Cox E.C."/>
            <person name="Chisholm R.L."/>
            <person name="Gibbs R.A."/>
            <person name="Loomis W.F."/>
            <person name="Platzer M."/>
            <person name="Kay R.R."/>
            <person name="Williams J.G."/>
            <person name="Dear P.H."/>
            <person name="Noegel A.A."/>
            <person name="Barrell B.G."/>
            <person name="Kuspa A."/>
        </authorList>
    </citation>
    <scope>NUCLEOTIDE SEQUENCE [LARGE SCALE GENOMIC DNA]</scope>
    <source>
        <strain>AX4</strain>
    </source>
</reference>
<name>C513B_DICDI</name>
<accession>Q54KV0</accession>